<gene>
    <name evidence="1" type="primary">nadD</name>
    <name type="ordered locus">Cpha266_2703</name>
</gene>
<accession>A1BJW0</accession>
<keyword id="KW-0067">ATP-binding</keyword>
<keyword id="KW-0520">NAD</keyword>
<keyword id="KW-0547">Nucleotide-binding</keyword>
<keyword id="KW-0548">Nucleotidyltransferase</keyword>
<keyword id="KW-0662">Pyridine nucleotide biosynthesis</keyword>
<keyword id="KW-1185">Reference proteome</keyword>
<keyword id="KW-0808">Transferase</keyword>
<feature type="chain" id="PRO_1000058990" description="Probable nicotinate-nucleotide adenylyltransferase">
    <location>
        <begin position="1"/>
        <end position="197"/>
    </location>
</feature>
<sequence length="197" mass="22733">MHVAVFGGTFDPPHNGHLAMCLLARELLHIDKVILSISNNPFKLLRSDHDDHRKNMVGLLASELKKTELPAEVSGWELQKKTPSYTVELLRFLRTEYPDVQLTLLVGEDSYREFPLWKSYEELVLLCRIAVFRRVPPEQIAHREQRLEMIGNVRFIDFDCPISSTTIRADIASGRPVTAKIPSAINRYIIDHRLYRD</sequence>
<proteinExistence type="inferred from homology"/>
<dbReference type="EC" id="2.7.7.18" evidence="1"/>
<dbReference type="EMBL" id="CP000492">
    <property type="protein sequence ID" value="ABL66687.1"/>
    <property type="molecule type" value="Genomic_DNA"/>
</dbReference>
<dbReference type="RefSeq" id="WP_015961214.1">
    <property type="nucleotide sequence ID" value="NC_008639.1"/>
</dbReference>
<dbReference type="SMR" id="A1BJW0"/>
<dbReference type="STRING" id="290317.Cpha266_2703"/>
<dbReference type="KEGG" id="cph:Cpha266_2703"/>
<dbReference type="eggNOG" id="COG1057">
    <property type="taxonomic scope" value="Bacteria"/>
</dbReference>
<dbReference type="HOGENOM" id="CLU_069765_3_2_10"/>
<dbReference type="OrthoDB" id="5295945at2"/>
<dbReference type="UniPathway" id="UPA00253">
    <property type="reaction ID" value="UER00332"/>
</dbReference>
<dbReference type="Proteomes" id="UP000008701">
    <property type="component" value="Chromosome"/>
</dbReference>
<dbReference type="GO" id="GO:0005524">
    <property type="term" value="F:ATP binding"/>
    <property type="evidence" value="ECO:0007669"/>
    <property type="project" value="UniProtKB-KW"/>
</dbReference>
<dbReference type="GO" id="GO:0004515">
    <property type="term" value="F:nicotinate-nucleotide adenylyltransferase activity"/>
    <property type="evidence" value="ECO:0007669"/>
    <property type="project" value="UniProtKB-UniRule"/>
</dbReference>
<dbReference type="GO" id="GO:0009435">
    <property type="term" value="P:NAD biosynthetic process"/>
    <property type="evidence" value="ECO:0007669"/>
    <property type="project" value="UniProtKB-UniRule"/>
</dbReference>
<dbReference type="CDD" id="cd02165">
    <property type="entry name" value="NMNAT"/>
    <property type="match status" value="1"/>
</dbReference>
<dbReference type="Gene3D" id="3.40.50.620">
    <property type="entry name" value="HUPs"/>
    <property type="match status" value="1"/>
</dbReference>
<dbReference type="HAMAP" id="MF_00244">
    <property type="entry name" value="NaMN_adenylyltr"/>
    <property type="match status" value="1"/>
</dbReference>
<dbReference type="InterPro" id="IPR004821">
    <property type="entry name" value="Cyt_trans-like"/>
</dbReference>
<dbReference type="InterPro" id="IPR005248">
    <property type="entry name" value="NadD/NMNAT"/>
</dbReference>
<dbReference type="InterPro" id="IPR014729">
    <property type="entry name" value="Rossmann-like_a/b/a_fold"/>
</dbReference>
<dbReference type="NCBIfam" id="TIGR00125">
    <property type="entry name" value="cyt_tran_rel"/>
    <property type="match status" value="1"/>
</dbReference>
<dbReference type="NCBIfam" id="TIGR00482">
    <property type="entry name" value="nicotinate (nicotinamide) nucleotide adenylyltransferase"/>
    <property type="match status" value="1"/>
</dbReference>
<dbReference type="PANTHER" id="PTHR39321">
    <property type="entry name" value="NICOTINATE-NUCLEOTIDE ADENYLYLTRANSFERASE-RELATED"/>
    <property type="match status" value="1"/>
</dbReference>
<dbReference type="PANTHER" id="PTHR39321:SF3">
    <property type="entry name" value="PHOSPHOPANTETHEINE ADENYLYLTRANSFERASE"/>
    <property type="match status" value="1"/>
</dbReference>
<dbReference type="Pfam" id="PF01467">
    <property type="entry name" value="CTP_transf_like"/>
    <property type="match status" value="1"/>
</dbReference>
<dbReference type="SUPFAM" id="SSF52374">
    <property type="entry name" value="Nucleotidylyl transferase"/>
    <property type="match status" value="1"/>
</dbReference>
<protein>
    <recommendedName>
        <fullName evidence="1">Probable nicotinate-nucleotide adenylyltransferase</fullName>
        <ecNumber evidence="1">2.7.7.18</ecNumber>
    </recommendedName>
    <alternativeName>
        <fullName evidence="1">Deamido-NAD(+) diphosphorylase</fullName>
    </alternativeName>
    <alternativeName>
        <fullName evidence="1">Deamido-NAD(+) pyrophosphorylase</fullName>
    </alternativeName>
    <alternativeName>
        <fullName evidence="1">Nicotinate mononucleotide adenylyltransferase</fullName>
        <shortName evidence="1">NaMN adenylyltransferase</shortName>
    </alternativeName>
</protein>
<evidence type="ECO:0000255" key="1">
    <source>
        <dbReference type="HAMAP-Rule" id="MF_00244"/>
    </source>
</evidence>
<organism>
    <name type="scientific">Chlorobium phaeobacteroides (strain DSM 266 / SMG 266 / 2430)</name>
    <dbReference type="NCBI Taxonomy" id="290317"/>
    <lineage>
        <taxon>Bacteria</taxon>
        <taxon>Pseudomonadati</taxon>
        <taxon>Chlorobiota</taxon>
        <taxon>Chlorobiia</taxon>
        <taxon>Chlorobiales</taxon>
        <taxon>Chlorobiaceae</taxon>
        <taxon>Chlorobium/Pelodictyon group</taxon>
        <taxon>Chlorobium</taxon>
    </lineage>
</organism>
<comment type="function">
    <text evidence="1">Catalyzes the reversible adenylation of nicotinate mononucleotide (NaMN) to nicotinic acid adenine dinucleotide (NaAD).</text>
</comment>
<comment type="catalytic activity">
    <reaction evidence="1">
        <text>nicotinate beta-D-ribonucleotide + ATP + H(+) = deamido-NAD(+) + diphosphate</text>
        <dbReference type="Rhea" id="RHEA:22860"/>
        <dbReference type="ChEBI" id="CHEBI:15378"/>
        <dbReference type="ChEBI" id="CHEBI:30616"/>
        <dbReference type="ChEBI" id="CHEBI:33019"/>
        <dbReference type="ChEBI" id="CHEBI:57502"/>
        <dbReference type="ChEBI" id="CHEBI:58437"/>
        <dbReference type="EC" id="2.7.7.18"/>
    </reaction>
</comment>
<comment type="pathway">
    <text evidence="1">Cofactor biosynthesis; NAD(+) biosynthesis; deamido-NAD(+) from nicotinate D-ribonucleotide: step 1/1.</text>
</comment>
<comment type="similarity">
    <text evidence="1">Belongs to the NadD family.</text>
</comment>
<reference key="1">
    <citation type="submission" date="2006-12" db="EMBL/GenBank/DDBJ databases">
        <title>Complete sequence of Chlorobium phaeobacteroides DSM 266.</title>
        <authorList>
            <consortium name="US DOE Joint Genome Institute"/>
            <person name="Copeland A."/>
            <person name="Lucas S."/>
            <person name="Lapidus A."/>
            <person name="Barry K."/>
            <person name="Detter J.C."/>
            <person name="Glavina del Rio T."/>
            <person name="Hammon N."/>
            <person name="Israni S."/>
            <person name="Pitluck S."/>
            <person name="Goltsman E."/>
            <person name="Schmutz J."/>
            <person name="Larimer F."/>
            <person name="Land M."/>
            <person name="Hauser L."/>
            <person name="Mikhailova N."/>
            <person name="Li T."/>
            <person name="Overmann J."/>
            <person name="Bryant D.A."/>
            <person name="Richardson P."/>
        </authorList>
    </citation>
    <scope>NUCLEOTIDE SEQUENCE [LARGE SCALE GENOMIC DNA]</scope>
    <source>
        <strain>DSM 266 / SMG 266 / 2430</strain>
    </source>
</reference>
<name>NADD_CHLPD</name>